<geneLocation type="chloroplast"/>
<keyword id="KW-0150">Chloroplast</keyword>
<keyword id="KW-0472">Membrane</keyword>
<keyword id="KW-0602">Photosynthesis</keyword>
<keyword id="KW-0604">Photosystem II</keyword>
<keyword id="KW-0934">Plastid</keyword>
<keyword id="KW-0674">Reaction center</keyword>
<keyword id="KW-0691">RNA editing</keyword>
<keyword id="KW-0793">Thylakoid</keyword>
<keyword id="KW-0812">Transmembrane</keyword>
<keyword id="KW-1133">Transmembrane helix</keyword>
<sequence length="34" mass="3683">MEVNILAFIATALFILIPTAFLLILYVQTASQGS</sequence>
<feature type="chain" id="PRO_0000217547" description="Photosystem II reaction center protein M">
    <location>
        <begin position="1"/>
        <end position="34"/>
    </location>
</feature>
<feature type="transmembrane region" description="Helical" evidence="1">
    <location>
        <begin position="5"/>
        <end position="25"/>
    </location>
</feature>
<dbReference type="EMBL" id="AB086179">
    <property type="protein sequence ID" value="BAC55324.1"/>
    <property type="molecule type" value="Genomic_DNA"/>
</dbReference>
<dbReference type="EMBL" id="AB087416">
    <property type="protein sequence ID" value="BAC55414.1"/>
    <property type="molecule type" value="mRNA"/>
</dbReference>
<dbReference type="RefSeq" id="NP_777388.1">
    <property type="nucleotide sequence ID" value="NC_004543.1"/>
</dbReference>
<dbReference type="SMR" id="Q85BK0"/>
<dbReference type="GeneID" id="2553407"/>
<dbReference type="GO" id="GO:0009535">
    <property type="term" value="C:chloroplast thylakoid membrane"/>
    <property type="evidence" value="ECO:0007669"/>
    <property type="project" value="UniProtKB-SubCell"/>
</dbReference>
<dbReference type="GO" id="GO:0009523">
    <property type="term" value="C:photosystem II"/>
    <property type="evidence" value="ECO:0007669"/>
    <property type="project" value="UniProtKB-KW"/>
</dbReference>
<dbReference type="GO" id="GO:0019684">
    <property type="term" value="P:photosynthesis, light reaction"/>
    <property type="evidence" value="ECO:0007669"/>
    <property type="project" value="InterPro"/>
</dbReference>
<dbReference type="HAMAP" id="MF_00438">
    <property type="entry name" value="PSII_PsbM"/>
    <property type="match status" value="1"/>
</dbReference>
<dbReference type="InterPro" id="IPR007826">
    <property type="entry name" value="PSII_PsbM"/>
</dbReference>
<dbReference type="InterPro" id="IPR037269">
    <property type="entry name" value="PSII_PsbM_sf"/>
</dbReference>
<dbReference type="NCBIfam" id="TIGR03038">
    <property type="entry name" value="PS_II_psbM"/>
    <property type="match status" value="1"/>
</dbReference>
<dbReference type="PANTHER" id="PTHR35774">
    <property type="entry name" value="PHOTOSYSTEM II REACTION CENTER PROTEIN M"/>
    <property type="match status" value="1"/>
</dbReference>
<dbReference type="PANTHER" id="PTHR35774:SF1">
    <property type="entry name" value="PHOTOSYSTEM II REACTION CENTER PROTEIN M"/>
    <property type="match status" value="1"/>
</dbReference>
<dbReference type="Pfam" id="PF05151">
    <property type="entry name" value="PsbM"/>
    <property type="match status" value="1"/>
</dbReference>
<dbReference type="SUPFAM" id="SSF161033">
    <property type="entry name" value="Photosystem II reaction center protein M, PsbM"/>
    <property type="match status" value="1"/>
</dbReference>
<name>PSBM_ANTAG</name>
<accession>Q85BK0</accession>
<organism>
    <name type="scientific">Anthoceros angustus</name>
    <name type="common">Hornwort</name>
    <name type="synonym">Anthoceros formosae</name>
    <dbReference type="NCBI Taxonomy" id="48387"/>
    <lineage>
        <taxon>Eukaryota</taxon>
        <taxon>Viridiplantae</taxon>
        <taxon>Streptophyta</taxon>
        <taxon>Embryophyta</taxon>
        <taxon>Anthocerotophyta</taxon>
        <taxon>Anthocerotopsida</taxon>
        <taxon>Anthocerotidae</taxon>
        <taxon>Anthocerotales</taxon>
        <taxon>Anthocerotaceae</taxon>
        <taxon>Anthoceros</taxon>
    </lineage>
</organism>
<proteinExistence type="evidence at transcript level"/>
<gene>
    <name evidence="1" type="primary">psbM</name>
</gene>
<protein>
    <recommendedName>
        <fullName evidence="1">Photosystem II reaction center protein M</fullName>
        <shortName evidence="1">PSII-M</shortName>
    </recommendedName>
</protein>
<evidence type="ECO:0000255" key="1">
    <source>
        <dbReference type="HAMAP-Rule" id="MF_00438"/>
    </source>
</evidence>
<evidence type="ECO:0000269" key="2">
    <source>
    </source>
</evidence>
<evidence type="ECO:0000269" key="3">
    <source>
    </source>
</evidence>
<reference key="1">
    <citation type="journal article" date="2003" name="Nucleic Acids Res.">
        <title>The complete nucleotide sequence of the hornwort (Anthoceros formosae) chloroplast genome: insight into the earliest land plants.</title>
        <authorList>
            <person name="Kugita M."/>
            <person name="Kaneko A."/>
            <person name="Yamamoto Y."/>
            <person name="Takeya Y."/>
            <person name="Matsumoto T."/>
            <person name="Yoshinaga K."/>
        </authorList>
    </citation>
    <scope>NUCLEOTIDE SEQUENCE [LARGE SCALE GENOMIC DNA]</scope>
    <scope>RNA EDITING</scope>
</reference>
<reference key="2">
    <citation type="journal article" date="2003" name="Nucleic Acids Res.">
        <title>RNA editing in hornwort chloroplasts makes more than half the genes functional.</title>
        <authorList>
            <person name="Kugita M."/>
            <person name="Yamamoto Y."/>
            <person name="Fujikawa T."/>
            <person name="Matsumoto T."/>
            <person name="Yoshinaga K."/>
        </authorList>
    </citation>
    <scope>NUCLEOTIDE SEQUENCE [MRNA]</scope>
    <scope>RNA EDITING</scope>
    <source>
        <tissue>Thallus</tissue>
    </source>
</reference>
<comment type="function">
    <text evidence="1">One of the components of the core complex of photosystem II (PSII). PSII is a light-driven water:plastoquinone oxidoreductase that uses light energy to abstract electrons from H(2)O, generating O(2) and a proton gradient subsequently used for ATP formation. It consists of a core antenna complex that captures photons, and an electron transfer chain that converts photonic excitation into a charge separation. This subunit is found at the monomer-monomer interface.</text>
</comment>
<comment type="subunit">
    <text evidence="1">PSII is composed of 1 copy each of membrane proteins PsbA, PsbB, PsbC, PsbD, PsbE, PsbF, PsbH, PsbI, PsbJ, PsbK, PsbL, PsbM, PsbT, PsbX, PsbY, PsbZ, Psb30/Ycf12, at least 3 peripheral proteins of the oxygen-evolving complex and a large number of cofactors. It forms dimeric complexes.</text>
</comment>
<comment type="subcellular location">
    <subcellularLocation>
        <location evidence="1">Plastid</location>
        <location evidence="1">Chloroplast thylakoid membrane</location>
        <topology evidence="1">Single-pass membrane protein</topology>
    </subcellularLocation>
</comment>
<comment type="RNA editing">
    <location>
        <position position="23" evidence="2 3"/>
    </location>
    <location>
        <position position="25" evidence="2 3"/>
    </location>
</comment>
<comment type="similarity">
    <text evidence="1">Belongs to the PsbM family.</text>
</comment>